<accession>A8H7J4</accession>
<proteinExistence type="inferred from homology"/>
<name>PYRC_SHEPA</name>
<sequence length="345" mass="37845">MTQITLLTPDDWHLHFRDGDMLQETVPATARLFQRAIVMPNLLPPVTDAKMVTEYRERILAARPAGSTFEPLMTIFLTNNTTEQDIIDAKAAGVVAAKLYPAGATTNSDAAVKALDALFPVFEAMAKHGMLLLVHGEVTESHIDIFDREAMFIERYLARIVAAFPTLKVVFEHITTKDAADFVMSAADNVAATITPQHLLLNRNDLLVGGVRPHNFCLPVLKRSTHQEALRAAVATGSSKFFLGTDSAPHEKHRKESACGCAGCYSAWSALELYAQVFDDLGALDKLEGFASKHGPDFYGLPRNTSTVTLVKEKWTVPSEIILPNGNPIVPFFAGEEINWKVKTA</sequence>
<comment type="function">
    <text evidence="1">Catalyzes the reversible cyclization of carbamoyl aspartate to dihydroorotate.</text>
</comment>
<comment type="catalytic activity">
    <reaction evidence="1">
        <text>(S)-dihydroorotate + H2O = N-carbamoyl-L-aspartate + H(+)</text>
        <dbReference type="Rhea" id="RHEA:24296"/>
        <dbReference type="ChEBI" id="CHEBI:15377"/>
        <dbReference type="ChEBI" id="CHEBI:15378"/>
        <dbReference type="ChEBI" id="CHEBI:30864"/>
        <dbReference type="ChEBI" id="CHEBI:32814"/>
        <dbReference type="EC" id="3.5.2.3"/>
    </reaction>
</comment>
<comment type="cofactor">
    <cofactor evidence="1">
        <name>Zn(2+)</name>
        <dbReference type="ChEBI" id="CHEBI:29105"/>
    </cofactor>
    <text evidence="1">Binds 2 Zn(2+) ions per subunit.</text>
</comment>
<comment type="pathway">
    <text evidence="1">Pyrimidine metabolism; UMP biosynthesis via de novo pathway; (S)-dihydroorotate from bicarbonate: step 3/3.</text>
</comment>
<comment type="subunit">
    <text evidence="1">Homodimer.</text>
</comment>
<comment type="similarity">
    <text evidence="1">Belongs to the metallo-dependent hydrolases superfamily. DHOase family. Class II DHOase subfamily.</text>
</comment>
<protein>
    <recommendedName>
        <fullName evidence="1">Dihydroorotase</fullName>
        <shortName evidence="1">DHOase</shortName>
        <ecNumber evidence="1">3.5.2.3</ecNumber>
    </recommendedName>
</protein>
<reference key="1">
    <citation type="submission" date="2007-10" db="EMBL/GenBank/DDBJ databases">
        <title>Complete sequence of Shewanella pealeana ATCC 700345.</title>
        <authorList>
            <consortium name="US DOE Joint Genome Institute"/>
            <person name="Copeland A."/>
            <person name="Lucas S."/>
            <person name="Lapidus A."/>
            <person name="Barry K."/>
            <person name="Glavina del Rio T."/>
            <person name="Dalin E."/>
            <person name="Tice H."/>
            <person name="Pitluck S."/>
            <person name="Chertkov O."/>
            <person name="Brettin T."/>
            <person name="Bruce D."/>
            <person name="Detter J.C."/>
            <person name="Han C."/>
            <person name="Schmutz J."/>
            <person name="Larimer F."/>
            <person name="Land M."/>
            <person name="Hauser L."/>
            <person name="Kyrpides N."/>
            <person name="Kim E."/>
            <person name="Zhao J.-S.Z."/>
            <person name="Manno D."/>
            <person name="Hawari J."/>
            <person name="Richardson P."/>
        </authorList>
    </citation>
    <scope>NUCLEOTIDE SEQUENCE [LARGE SCALE GENOMIC DNA]</scope>
    <source>
        <strain>ATCC 700345 / ANG-SQ1</strain>
    </source>
</reference>
<gene>
    <name evidence="1" type="primary">pyrC</name>
    <name type="ordered locus">Spea_3215</name>
</gene>
<dbReference type="EC" id="3.5.2.3" evidence="1"/>
<dbReference type="EMBL" id="CP000851">
    <property type="protein sequence ID" value="ABV88531.1"/>
    <property type="molecule type" value="Genomic_DNA"/>
</dbReference>
<dbReference type="RefSeq" id="WP_012156432.1">
    <property type="nucleotide sequence ID" value="NC_009901.1"/>
</dbReference>
<dbReference type="SMR" id="A8H7J4"/>
<dbReference type="STRING" id="398579.Spea_3215"/>
<dbReference type="MEROPS" id="M38.A02"/>
<dbReference type="KEGG" id="spl:Spea_3215"/>
<dbReference type="eggNOG" id="COG0418">
    <property type="taxonomic scope" value="Bacteria"/>
</dbReference>
<dbReference type="HOGENOM" id="CLU_041558_1_0_6"/>
<dbReference type="OrthoDB" id="9808095at2"/>
<dbReference type="UniPathway" id="UPA00070">
    <property type="reaction ID" value="UER00117"/>
</dbReference>
<dbReference type="Proteomes" id="UP000002608">
    <property type="component" value="Chromosome"/>
</dbReference>
<dbReference type="GO" id="GO:0005829">
    <property type="term" value="C:cytosol"/>
    <property type="evidence" value="ECO:0007669"/>
    <property type="project" value="TreeGrafter"/>
</dbReference>
<dbReference type="GO" id="GO:0004151">
    <property type="term" value="F:dihydroorotase activity"/>
    <property type="evidence" value="ECO:0007669"/>
    <property type="project" value="UniProtKB-UniRule"/>
</dbReference>
<dbReference type="GO" id="GO:0008270">
    <property type="term" value="F:zinc ion binding"/>
    <property type="evidence" value="ECO:0007669"/>
    <property type="project" value="UniProtKB-UniRule"/>
</dbReference>
<dbReference type="GO" id="GO:0006207">
    <property type="term" value="P:'de novo' pyrimidine nucleobase biosynthetic process"/>
    <property type="evidence" value="ECO:0007669"/>
    <property type="project" value="TreeGrafter"/>
</dbReference>
<dbReference type="GO" id="GO:0044205">
    <property type="term" value="P:'de novo' UMP biosynthetic process"/>
    <property type="evidence" value="ECO:0007669"/>
    <property type="project" value="UniProtKB-UniRule"/>
</dbReference>
<dbReference type="CDD" id="cd01294">
    <property type="entry name" value="DHOase"/>
    <property type="match status" value="1"/>
</dbReference>
<dbReference type="FunFam" id="3.20.20.140:FF:000006">
    <property type="entry name" value="Dihydroorotase"/>
    <property type="match status" value="1"/>
</dbReference>
<dbReference type="Gene3D" id="3.20.20.140">
    <property type="entry name" value="Metal-dependent hydrolases"/>
    <property type="match status" value="1"/>
</dbReference>
<dbReference type="HAMAP" id="MF_00219">
    <property type="entry name" value="PyrC_classII"/>
    <property type="match status" value="1"/>
</dbReference>
<dbReference type="InterPro" id="IPR006680">
    <property type="entry name" value="Amidohydro-rel"/>
</dbReference>
<dbReference type="InterPro" id="IPR004721">
    <property type="entry name" value="DHOdimr"/>
</dbReference>
<dbReference type="InterPro" id="IPR002195">
    <property type="entry name" value="Dihydroorotase_CS"/>
</dbReference>
<dbReference type="InterPro" id="IPR032466">
    <property type="entry name" value="Metal_Hydrolase"/>
</dbReference>
<dbReference type="NCBIfam" id="TIGR00856">
    <property type="entry name" value="pyrC_dimer"/>
    <property type="match status" value="1"/>
</dbReference>
<dbReference type="PANTHER" id="PTHR43137">
    <property type="entry name" value="DIHYDROOROTASE"/>
    <property type="match status" value="1"/>
</dbReference>
<dbReference type="PANTHER" id="PTHR43137:SF1">
    <property type="entry name" value="DIHYDROOROTASE"/>
    <property type="match status" value="1"/>
</dbReference>
<dbReference type="Pfam" id="PF01979">
    <property type="entry name" value="Amidohydro_1"/>
    <property type="match status" value="1"/>
</dbReference>
<dbReference type="PIRSF" id="PIRSF001237">
    <property type="entry name" value="DHOdimr"/>
    <property type="match status" value="1"/>
</dbReference>
<dbReference type="SUPFAM" id="SSF51556">
    <property type="entry name" value="Metallo-dependent hydrolases"/>
    <property type="match status" value="1"/>
</dbReference>
<dbReference type="PROSITE" id="PS00482">
    <property type="entry name" value="DIHYDROOROTASE_1"/>
    <property type="match status" value="1"/>
</dbReference>
<dbReference type="PROSITE" id="PS00483">
    <property type="entry name" value="DIHYDROOROTASE_2"/>
    <property type="match status" value="1"/>
</dbReference>
<evidence type="ECO:0000255" key="1">
    <source>
        <dbReference type="HAMAP-Rule" id="MF_00219"/>
    </source>
</evidence>
<keyword id="KW-0378">Hydrolase</keyword>
<keyword id="KW-0479">Metal-binding</keyword>
<keyword id="KW-0665">Pyrimidine biosynthesis</keyword>
<keyword id="KW-1185">Reference proteome</keyword>
<keyword id="KW-0862">Zinc</keyword>
<feature type="chain" id="PRO_1000078105" description="Dihydroorotase">
    <location>
        <begin position="1"/>
        <end position="345"/>
    </location>
</feature>
<feature type="active site" evidence="1">
    <location>
        <position position="246"/>
    </location>
</feature>
<feature type="binding site" evidence="1">
    <location>
        <position position="13"/>
    </location>
    <ligand>
        <name>Zn(2+)</name>
        <dbReference type="ChEBI" id="CHEBI:29105"/>
        <label>1</label>
    </ligand>
</feature>
<feature type="binding site" evidence="1">
    <location>
        <begin position="15"/>
        <end position="17"/>
    </location>
    <ligand>
        <name>substrate</name>
    </ligand>
</feature>
<feature type="binding site" evidence="1">
    <location>
        <position position="15"/>
    </location>
    <ligand>
        <name>Zn(2+)</name>
        <dbReference type="ChEBI" id="CHEBI:29105"/>
        <label>1</label>
    </ligand>
</feature>
<feature type="binding site" evidence="1">
    <location>
        <position position="41"/>
    </location>
    <ligand>
        <name>substrate</name>
    </ligand>
</feature>
<feature type="binding site" description="via carbamate group" evidence="1">
    <location>
        <position position="98"/>
    </location>
    <ligand>
        <name>Zn(2+)</name>
        <dbReference type="ChEBI" id="CHEBI:29105"/>
        <label>1</label>
    </ligand>
</feature>
<feature type="binding site" description="via carbamate group" evidence="1">
    <location>
        <position position="98"/>
    </location>
    <ligand>
        <name>Zn(2+)</name>
        <dbReference type="ChEBI" id="CHEBI:29105"/>
        <label>2</label>
    </ligand>
</feature>
<feature type="binding site" evidence="1">
    <location>
        <position position="135"/>
    </location>
    <ligand>
        <name>substrate</name>
    </ligand>
</feature>
<feature type="binding site" evidence="1">
    <location>
        <position position="135"/>
    </location>
    <ligand>
        <name>Zn(2+)</name>
        <dbReference type="ChEBI" id="CHEBI:29105"/>
        <label>2</label>
    </ligand>
</feature>
<feature type="binding site" evidence="1">
    <location>
        <position position="173"/>
    </location>
    <ligand>
        <name>Zn(2+)</name>
        <dbReference type="ChEBI" id="CHEBI:29105"/>
        <label>2</label>
    </ligand>
</feature>
<feature type="binding site" evidence="1">
    <location>
        <position position="218"/>
    </location>
    <ligand>
        <name>substrate</name>
    </ligand>
</feature>
<feature type="binding site" evidence="1">
    <location>
        <position position="246"/>
    </location>
    <ligand>
        <name>Zn(2+)</name>
        <dbReference type="ChEBI" id="CHEBI:29105"/>
        <label>1</label>
    </ligand>
</feature>
<feature type="binding site" evidence="1">
    <location>
        <position position="250"/>
    </location>
    <ligand>
        <name>substrate</name>
    </ligand>
</feature>
<feature type="binding site" evidence="1">
    <location>
        <position position="262"/>
    </location>
    <ligand>
        <name>substrate</name>
    </ligand>
</feature>
<feature type="modified residue" description="N6-carboxylysine" evidence="1">
    <location>
        <position position="98"/>
    </location>
</feature>
<organism>
    <name type="scientific">Shewanella pealeana (strain ATCC 700345 / ANG-SQ1)</name>
    <dbReference type="NCBI Taxonomy" id="398579"/>
    <lineage>
        <taxon>Bacteria</taxon>
        <taxon>Pseudomonadati</taxon>
        <taxon>Pseudomonadota</taxon>
        <taxon>Gammaproteobacteria</taxon>
        <taxon>Alteromonadales</taxon>
        <taxon>Shewanellaceae</taxon>
        <taxon>Shewanella</taxon>
    </lineage>
</organism>